<protein>
    <recommendedName>
        <fullName evidence="5">Putrescine--pyruvate aminotransferase</fullName>
        <shortName evidence="5">PATase</shortName>
        <ecNumber evidence="7">2.6.1.113</ecNumber>
    </recommendedName>
    <alternativeName>
        <fullName evidence="6">Putrescine--pyruvate transaminase</fullName>
    </alternativeName>
</protein>
<comment type="function">
    <text evidence="3 4">Involved in the putrescine catabolism. Catalyzes the transfer of the amino group from putrescine to pyruvate to yield 4-aminobutanal and alanine.</text>
</comment>
<comment type="catalytic activity">
    <reaction evidence="7">
        <text>putrescine + pyruvate = 4-aminobutanal + L-alanine</text>
        <dbReference type="Rhea" id="RHEA:30707"/>
        <dbReference type="ChEBI" id="CHEBI:15361"/>
        <dbReference type="ChEBI" id="CHEBI:57972"/>
        <dbReference type="ChEBI" id="CHEBI:58264"/>
        <dbReference type="ChEBI" id="CHEBI:326268"/>
        <dbReference type="EC" id="2.6.1.113"/>
    </reaction>
</comment>
<comment type="cofactor">
    <cofactor evidence="2">
        <name>pyridoxal 5'-phosphate</name>
        <dbReference type="ChEBI" id="CHEBI:597326"/>
    </cofactor>
</comment>
<comment type="pathway">
    <text evidence="7">Amine and polyamine degradation; putrescine degradation; 4-aminobutanal from putrescine (transaminase route).</text>
</comment>
<comment type="induction">
    <text evidence="3">By putrescine and agmatine. Also regulated by the global CbrA/CbrB two-component system.</text>
</comment>
<comment type="disruption phenotype">
    <text evidence="3">Cells lacking this gene are unable to utilize putrescine as the sole source of carbon and nitrogen.</text>
</comment>
<comment type="similarity">
    <text evidence="6">Belongs to the class-III pyridoxal-phosphate-dependent aminotransferase family.</text>
</comment>
<dbReference type="EC" id="2.6.1.113" evidence="7"/>
<dbReference type="EMBL" id="AE004091">
    <property type="protein sequence ID" value="AAG03688.1"/>
    <property type="molecule type" value="Genomic_DNA"/>
</dbReference>
<dbReference type="PIR" id="E83609">
    <property type="entry name" value="E83609"/>
</dbReference>
<dbReference type="RefSeq" id="NP_248990.1">
    <property type="nucleotide sequence ID" value="NC_002516.2"/>
</dbReference>
<dbReference type="RefSeq" id="WP_003084297.1">
    <property type="nucleotide sequence ID" value="NZ_QZGE01000016.1"/>
</dbReference>
<dbReference type="SMR" id="Q9I6J2"/>
<dbReference type="STRING" id="208964.PA0299"/>
<dbReference type="PaxDb" id="208964-PA0299"/>
<dbReference type="GeneID" id="77218821"/>
<dbReference type="GeneID" id="878357"/>
<dbReference type="KEGG" id="pae:PA0299"/>
<dbReference type="PATRIC" id="fig|208964.12.peg.313"/>
<dbReference type="PseudoCAP" id="PA0299"/>
<dbReference type="HOGENOM" id="CLU_016922_4_1_6"/>
<dbReference type="InParanoid" id="Q9I6J2"/>
<dbReference type="OrthoDB" id="9801052at2"/>
<dbReference type="PhylomeDB" id="Q9I6J2"/>
<dbReference type="BioCyc" id="MetaCyc:MONOMER-17"/>
<dbReference type="BioCyc" id="PAER208964:G1FZ6-301-MONOMER"/>
<dbReference type="BRENDA" id="2.6.1.113">
    <property type="organism ID" value="5087"/>
</dbReference>
<dbReference type="BRENDA" id="2.6.1.29">
    <property type="organism ID" value="5087"/>
</dbReference>
<dbReference type="Proteomes" id="UP000002438">
    <property type="component" value="Chromosome"/>
</dbReference>
<dbReference type="GO" id="GO:0004015">
    <property type="term" value="F:adenosylmethionine-8-amino-7-oxononanoate transaminase activity"/>
    <property type="evidence" value="ECO:0000318"/>
    <property type="project" value="GO_Central"/>
</dbReference>
<dbReference type="GO" id="GO:0030170">
    <property type="term" value="F:pyridoxal phosphate binding"/>
    <property type="evidence" value="ECO:0007669"/>
    <property type="project" value="InterPro"/>
</dbReference>
<dbReference type="GO" id="GO:0008483">
    <property type="term" value="F:transaminase activity"/>
    <property type="evidence" value="ECO:0000315"/>
    <property type="project" value="PseudoCAP"/>
</dbReference>
<dbReference type="GO" id="GO:0009102">
    <property type="term" value="P:biotin biosynthetic process"/>
    <property type="evidence" value="ECO:0000318"/>
    <property type="project" value="GO_Central"/>
</dbReference>
<dbReference type="GO" id="GO:0009448">
    <property type="term" value="P:gamma-aminobutyric acid metabolic process"/>
    <property type="evidence" value="ECO:0000318"/>
    <property type="project" value="GO_Central"/>
</dbReference>
<dbReference type="GO" id="GO:0009447">
    <property type="term" value="P:putrescine catabolic process"/>
    <property type="evidence" value="ECO:0000315"/>
    <property type="project" value="PseudoCAP"/>
</dbReference>
<dbReference type="CDD" id="cd00610">
    <property type="entry name" value="OAT_like"/>
    <property type="match status" value="1"/>
</dbReference>
<dbReference type="FunFam" id="3.40.640.10:FF:000014">
    <property type="entry name" value="Adenosylmethionine-8-amino-7-oxononanoate aminotransferase, probable"/>
    <property type="match status" value="1"/>
</dbReference>
<dbReference type="Gene3D" id="3.90.1150.10">
    <property type="entry name" value="Aspartate Aminotransferase, domain 1"/>
    <property type="match status" value="1"/>
</dbReference>
<dbReference type="Gene3D" id="3.40.640.10">
    <property type="entry name" value="Type I PLP-dependent aspartate aminotransferase-like (Major domain)"/>
    <property type="match status" value="1"/>
</dbReference>
<dbReference type="InterPro" id="IPR005814">
    <property type="entry name" value="Aminotrans_3"/>
</dbReference>
<dbReference type="InterPro" id="IPR049704">
    <property type="entry name" value="Aminotrans_3_PPA_site"/>
</dbReference>
<dbReference type="InterPro" id="IPR015424">
    <property type="entry name" value="PyrdxlP-dep_Trfase"/>
</dbReference>
<dbReference type="InterPro" id="IPR015421">
    <property type="entry name" value="PyrdxlP-dep_Trfase_major"/>
</dbReference>
<dbReference type="InterPro" id="IPR015422">
    <property type="entry name" value="PyrdxlP-dep_Trfase_small"/>
</dbReference>
<dbReference type="NCBIfam" id="NF004767">
    <property type="entry name" value="PRK06105.1"/>
    <property type="match status" value="1"/>
</dbReference>
<dbReference type="NCBIfam" id="NF005682">
    <property type="entry name" value="PRK07480.1"/>
    <property type="match status" value="1"/>
</dbReference>
<dbReference type="PANTHER" id="PTHR43094">
    <property type="entry name" value="AMINOTRANSFERASE"/>
    <property type="match status" value="1"/>
</dbReference>
<dbReference type="PANTHER" id="PTHR43094:SF1">
    <property type="entry name" value="AMINOTRANSFERASE CLASS-III"/>
    <property type="match status" value="1"/>
</dbReference>
<dbReference type="Pfam" id="PF00202">
    <property type="entry name" value="Aminotran_3"/>
    <property type="match status" value="1"/>
</dbReference>
<dbReference type="PIRSF" id="PIRSF000521">
    <property type="entry name" value="Transaminase_4ab_Lys_Orn"/>
    <property type="match status" value="1"/>
</dbReference>
<dbReference type="SUPFAM" id="SSF53383">
    <property type="entry name" value="PLP-dependent transferases"/>
    <property type="match status" value="1"/>
</dbReference>
<dbReference type="PROSITE" id="PS00600">
    <property type="entry name" value="AA_TRANSFER_CLASS_3"/>
    <property type="match status" value="1"/>
</dbReference>
<accession>Q9I6J2</accession>
<evidence type="ECO:0000250" key="1">
    <source>
        <dbReference type="UniProtKB" id="P12995"/>
    </source>
</evidence>
<evidence type="ECO:0000250" key="2">
    <source>
        <dbReference type="UniProtKB" id="P53555"/>
    </source>
</evidence>
<evidence type="ECO:0000269" key="3">
    <source>
    </source>
</evidence>
<evidence type="ECO:0000269" key="4">
    <source>
    </source>
</evidence>
<evidence type="ECO:0000303" key="5">
    <source>
    </source>
</evidence>
<evidence type="ECO:0000305" key="6"/>
<evidence type="ECO:0000305" key="7">
    <source>
    </source>
</evidence>
<evidence type="ECO:0000312" key="8">
    <source>
        <dbReference type="EMBL" id="AAG03688.1"/>
    </source>
</evidence>
<evidence type="ECO:0000312" key="9">
    <source>
        <dbReference type="Proteomes" id="UP000002438"/>
    </source>
</evidence>
<sequence>MNSQITNAKTREWQALSRDHHLPPFTDYKQLNEKGARIITKAEGVYIWDSEGNKILDAMAGLWCVNVGYGREELVQAATRQMRELPFYNLFFQTAHPPVVELAKAIADVAPEGMNHVFFTGSGSEANDTVLRMVRHYWATKGQPQKKVVIGRWNGYHGSTVAGVSLGGMKALHEQGDFPIPGIVHIAQPYWYGEGGDMSPDEFGVWAAEQLEKKILEVGEENVAAFIAEPIQGAGGVIVPPDTYWPKIREILAKYDILFIADEVICGFGRTGEWFGSQYYGNAPDLMPIAKGLTSGYIPMGGVVVRDEIVEVLNQGGEFYHGFTYSGHPVAAAVALENIRILREEKIIEKVKAETAPYLQKRWQELADHPLVGEARGVGMVAALELVKNKKTRERFTDKGVGMLCREHCFRNGLIMRAVGDTMIISPPLVIDPSQIDELITLARKCLDQTAAAVLA</sequence>
<organism>
    <name type="scientific">Pseudomonas aeruginosa (strain ATCC 15692 / DSM 22644 / CIP 104116 / JCM 14847 / LMG 12228 / 1C / PRS 101 / PAO1)</name>
    <dbReference type="NCBI Taxonomy" id="208964"/>
    <lineage>
        <taxon>Bacteria</taxon>
        <taxon>Pseudomonadati</taxon>
        <taxon>Pseudomonadota</taxon>
        <taxon>Gammaproteobacteria</taxon>
        <taxon>Pseudomonadales</taxon>
        <taxon>Pseudomonadaceae</taxon>
        <taxon>Pseudomonas</taxon>
    </lineage>
</organism>
<proteinExistence type="evidence at protein level"/>
<gene>
    <name evidence="5" type="primary">spuC</name>
    <name evidence="8" type="ordered locus">PA0299</name>
</gene>
<keyword id="KW-0032">Aminotransferase</keyword>
<keyword id="KW-0663">Pyridoxal phosphate</keyword>
<keyword id="KW-1185">Reference proteome</keyword>
<keyword id="KW-0808">Transferase</keyword>
<feature type="chain" id="PRO_0000442298" description="Putrescine--pyruvate aminotransferase">
    <location>
        <begin position="1"/>
        <end position="456"/>
    </location>
</feature>
<feature type="binding site" evidence="2">
    <location>
        <position position="156"/>
    </location>
    <ligand>
        <name>substrate</name>
    </ligand>
</feature>
<feature type="binding site" evidence="1">
    <location>
        <position position="262"/>
    </location>
    <ligand>
        <name>pyridoxal 5'-phosphate</name>
        <dbReference type="ChEBI" id="CHEBI:597326"/>
    </ligand>
</feature>
<feature type="binding site" evidence="2">
    <location>
        <position position="322"/>
    </location>
    <ligand>
        <name>substrate</name>
    </ligand>
</feature>
<feature type="binding site" evidence="2">
    <location>
        <position position="417"/>
    </location>
    <ligand>
        <name>substrate</name>
    </ligand>
</feature>
<feature type="modified residue" description="N6-(pyridoxal phosphate)lysine" evidence="2">
    <location>
        <position position="291"/>
    </location>
</feature>
<name>SPUC_PSEAE</name>
<reference key="1">
    <citation type="journal article" date="2000" name="Nature">
        <title>Complete genome sequence of Pseudomonas aeruginosa PAO1, an opportunistic pathogen.</title>
        <authorList>
            <person name="Stover C.K."/>
            <person name="Pham X.-Q.T."/>
            <person name="Erwin A.L."/>
            <person name="Mizoguchi S.D."/>
            <person name="Warrener P."/>
            <person name="Hickey M.J."/>
            <person name="Brinkman F.S.L."/>
            <person name="Hufnagle W.O."/>
            <person name="Kowalik D.J."/>
            <person name="Lagrou M."/>
            <person name="Garber R.L."/>
            <person name="Goltry L."/>
            <person name="Tolentino E."/>
            <person name="Westbrock-Wadman S."/>
            <person name="Yuan Y."/>
            <person name="Brody L.L."/>
            <person name="Coulter S.N."/>
            <person name="Folger K.R."/>
            <person name="Kas A."/>
            <person name="Larbig K."/>
            <person name="Lim R.M."/>
            <person name="Smith K.A."/>
            <person name="Spencer D.H."/>
            <person name="Wong G.K.-S."/>
            <person name="Wu Z."/>
            <person name="Paulsen I.T."/>
            <person name="Reizer J."/>
            <person name="Saier M.H. Jr."/>
            <person name="Hancock R.E.W."/>
            <person name="Lory S."/>
            <person name="Olson M.V."/>
        </authorList>
    </citation>
    <scope>NUCLEOTIDE SEQUENCE [LARGE SCALE GENOMIC DNA]</scope>
    <source>
        <strain evidence="9">ATCC 15692 / DSM 22644 / CIP 104116 / JCM 14847 / LMG 12228 / 1C / PRS 101 / PAO1</strain>
    </source>
</reference>
<reference key="2">
    <citation type="journal article" date="2002" name="J. Bacteriol.">
        <title>Functional analysis, and regulation of the divergent spuABCDEFGH-spuI operons for polyamine uptake and utilization in Pseudomonas aeruginosa PAO1.</title>
        <authorList>
            <person name="Lu C.D."/>
            <person name="Itoh Y."/>
            <person name="Nakada Y."/>
            <person name="Jiang Y."/>
        </authorList>
    </citation>
    <scope>FUNCTION</scope>
    <scope>CATALYTIC ACTIVITY</scope>
    <scope>DISRUPTION PHENOTYPE</scope>
    <scope>INDUCTION</scope>
    <scope>PATHWAY</scope>
    <source>
        <strain>ATCC 15692 / DSM 22644 / CIP 104116 / JCM 14847 / LMG 12228 / 1C / PRS 101 / PAO1</strain>
    </source>
</reference>
<reference key="3">
    <citation type="journal article" date="2008" name="J. Bacteriol.">
        <title>Transcriptome analysis of agmatine and putrescine catabolism in Pseudomonas aeruginosa PAO1.</title>
        <authorList>
            <person name="Chou H.T."/>
            <person name="Kwon D.H."/>
            <person name="Hegazy M."/>
            <person name="Lu C.D."/>
        </authorList>
    </citation>
    <scope>FUNCTION</scope>
    <source>
        <strain>ATCC 15692 / DSM 22644 / CIP 104116 / JCM 14847 / LMG 12228 / 1C / PRS 101 / PAO1</strain>
    </source>
</reference>